<gene>
    <name evidence="5 6" type="primary">HIPP03</name>
    <name evidence="5" type="synonym">HIPP3</name>
    <name evidence="8" type="ordered locus">At5g60800</name>
    <name evidence="9" type="ORF">MAE1.5</name>
</gene>
<proteinExistence type="evidence at protein level"/>
<feature type="chain" id="PRO_0000435853" description="Heavy metal-associated isoprenylated plant protein 3">
    <location>
        <begin position="1"/>
        <end position="280"/>
    </location>
</feature>
<feature type="propeptide" id="PRO_0000435854" description="Removed in mature form" evidence="7">
    <location>
        <begin position="281"/>
        <end position="283"/>
    </location>
</feature>
<feature type="domain" description="HMA 1" evidence="2">
    <location>
        <begin position="25"/>
        <end position="88"/>
    </location>
</feature>
<feature type="domain" description="HMA 2" evidence="2">
    <location>
        <begin position="132"/>
        <end position="195"/>
    </location>
</feature>
<feature type="region of interest" description="Disordered" evidence="3">
    <location>
        <begin position="1"/>
        <end position="26"/>
    </location>
</feature>
<feature type="region of interest" description="Disordered" evidence="3">
    <location>
        <begin position="82"/>
        <end position="131"/>
    </location>
</feature>
<feature type="region of interest" description="Disordered" evidence="3">
    <location>
        <begin position="198"/>
        <end position="238"/>
    </location>
</feature>
<feature type="compositionally biased region" description="Basic and acidic residues" evidence="3">
    <location>
        <begin position="1"/>
        <end position="22"/>
    </location>
</feature>
<feature type="compositionally biased region" description="Basic and acidic residues" evidence="3">
    <location>
        <begin position="82"/>
        <end position="129"/>
    </location>
</feature>
<feature type="compositionally biased region" description="Basic and acidic residues" evidence="3">
    <location>
        <begin position="198"/>
        <end position="230"/>
    </location>
</feature>
<feature type="binding site" evidence="2 4">
    <location>
        <position position="36"/>
    </location>
    <ligand>
        <name>Zn(2+)</name>
        <dbReference type="ChEBI" id="CHEBI:29105"/>
        <label>1</label>
    </ligand>
</feature>
<feature type="binding site" evidence="2 4">
    <location>
        <position position="39"/>
    </location>
    <ligand>
        <name>Zn(2+)</name>
        <dbReference type="ChEBI" id="CHEBI:29105"/>
        <label>1</label>
    </ligand>
</feature>
<feature type="binding site" evidence="2 4">
    <location>
        <position position="143"/>
    </location>
    <ligand>
        <name>Zn(2+)</name>
        <dbReference type="ChEBI" id="CHEBI:29105"/>
        <label>2</label>
    </ligand>
</feature>
<feature type="binding site" evidence="2 4">
    <location>
        <position position="146"/>
    </location>
    <ligand>
        <name>Zn(2+)</name>
        <dbReference type="ChEBI" id="CHEBI:29105"/>
        <label>2</label>
    </ligand>
</feature>
<feature type="modified residue" description="Cysteine methyl ester" evidence="1">
    <location>
        <position position="280"/>
    </location>
</feature>
<feature type="lipid moiety-binding region" description="S-farnesyl cysteine" evidence="1">
    <location>
        <position position="280"/>
    </location>
</feature>
<feature type="mutagenesis site" description="Loss of zinc binding; in association with C-39; C-143 and C-146." evidence="4">
    <original>C</original>
    <variation>G</variation>
    <location>
        <position position="36"/>
    </location>
</feature>
<feature type="mutagenesis site" description="Loss of zinc binding; in association with C-36; C-143 and C-146." evidence="4">
    <original>C</original>
    <variation>G</variation>
    <location>
        <position position="39"/>
    </location>
</feature>
<feature type="mutagenesis site" description="Loss of zinc binding; in association with C-36; C-39 and C-146." evidence="4">
    <original>C</original>
    <variation>G</variation>
    <location>
        <position position="143"/>
    </location>
</feature>
<feature type="mutagenesis site" description="Loss of zinc binding; in association with C-36; C-39 and C-143." evidence="4">
    <original>C</original>
    <variation>G</variation>
    <location>
        <position position="146"/>
    </location>
</feature>
<evidence type="ECO:0000250" key="1">
    <source>
        <dbReference type="UniProtKB" id="Q9SZN7"/>
    </source>
</evidence>
<evidence type="ECO:0000255" key="2">
    <source>
        <dbReference type="PROSITE-ProRule" id="PRU00280"/>
    </source>
</evidence>
<evidence type="ECO:0000256" key="3">
    <source>
        <dbReference type="SAM" id="MobiDB-lite"/>
    </source>
</evidence>
<evidence type="ECO:0000269" key="4">
    <source>
    </source>
</evidence>
<evidence type="ECO:0000303" key="5">
    <source>
    </source>
</evidence>
<evidence type="ECO:0000303" key="6">
    <source>
    </source>
</evidence>
<evidence type="ECO:0000305" key="7"/>
<evidence type="ECO:0000312" key="8">
    <source>
        <dbReference type="Araport" id="AT5G60800"/>
    </source>
</evidence>
<evidence type="ECO:0000312" key="9">
    <source>
        <dbReference type="EMBL" id="BAB10101.1"/>
    </source>
</evidence>
<keyword id="KW-0025">Alternative splicing</keyword>
<keyword id="KW-0963">Cytoplasm</keyword>
<keyword id="KW-0449">Lipoprotein</keyword>
<keyword id="KW-0479">Metal-binding</keyword>
<keyword id="KW-0488">Methylation</keyword>
<keyword id="KW-0539">Nucleus</keyword>
<keyword id="KW-0636">Prenylation</keyword>
<keyword id="KW-1185">Reference proteome</keyword>
<keyword id="KW-0677">Repeat</keyword>
<keyword id="KW-0862">Zinc</keyword>
<dbReference type="EMBL" id="AB015472">
    <property type="protein sequence ID" value="BAB10101.1"/>
    <property type="molecule type" value="Genomic_DNA"/>
</dbReference>
<dbReference type="EMBL" id="CP002688">
    <property type="protein sequence ID" value="AED97378.1"/>
    <property type="molecule type" value="Genomic_DNA"/>
</dbReference>
<dbReference type="EMBL" id="BT004613">
    <property type="protein sequence ID" value="AAO42859.1"/>
    <property type="molecule type" value="mRNA"/>
</dbReference>
<dbReference type="EMBL" id="AK227985">
    <property type="protein sequence ID" value="BAE99951.1"/>
    <property type="molecule type" value="mRNA"/>
</dbReference>
<dbReference type="RefSeq" id="NP_200888.2">
    <molecule id="Q9FJH5-1"/>
    <property type="nucleotide sequence ID" value="NM_125473.4"/>
</dbReference>
<dbReference type="SMR" id="Q9FJH5"/>
<dbReference type="FunCoup" id="Q9FJH5">
    <property type="interactions" value="125"/>
</dbReference>
<dbReference type="STRING" id="3702.Q9FJH5"/>
<dbReference type="PaxDb" id="3702-AT5G60800.2"/>
<dbReference type="EnsemblPlants" id="AT5G60800.1">
    <molecule id="Q9FJH5-1"/>
    <property type="protein sequence ID" value="AT5G60800.1"/>
    <property type="gene ID" value="AT5G60800"/>
</dbReference>
<dbReference type="GeneID" id="836201"/>
<dbReference type="Gramene" id="AT5G60800.1">
    <molecule id="Q9FJH5-1"/>
    <property type="protein sequence ID" value="AT5G60800.1"/>
    <property type="gene ID" value="AT5G60800"/>
</dbReference>
<dbReference type="KEGG" id="ath:AT5G60800"/>
<dbReference type="Araport" id="AT5G60800"/>
<dbReference type="TAIR" id="AT5G60800">
    <property type="gene designation" value="HIPP3"/>
</dbReference>
<dbReference type="eggNOG" id="KOG1603">
    <property type="taxonomic scope" value="Eukaryota"/>
</dbReference>
<dbReference type="HOGENOM" id="CLU_039886_0_0_1"/>
<dbReference type="InParanoid" id="Q9FJH5"/>
<dbReference type="OMA" id="HCEGCVT"/>
<dbReference type="OrthoDB" id="773760at2759"/>
<dbReference type="PhylomeDB" id="Q9FJH5"/>
<dbReference type="PRO" id="PR:Q9FJH5"/>
<dbReference type="Proteomes" id="UP000006548">
    <property type="component" value="Chromosome 5"/>
</dbReference>
<dbReference type="ExpressionAtlas" id="Q9FJH5">
    <property type="expression patterns" value="baseline and differential"/>
</dbReference>
<dbReference type="GO" id="GO:0005737">
    <property type="term" value="C:cytoplasm"/>
    <property type="evidence" value="ECO:0007669"/>
    <property type="project" value="UniProtKB-SubCell"/>
</dbReference>
<dbReference type="GO" id="GO:0005730">
    <property type="term" value="C:nucleolus"/>
    <property type="evidence" value="ECO:0000314"/>
    <property type="project" value="UniProtKB"/>
</dbReference>
<dbReference type="GO" id="GO:0005634">
    <property type="term" value="C:nucleus"/>
    <property type="evidence" value="ECO:0000314"/>
    <property type="project" value="UniProtKB"/>
</dbReference>
<dbReference type="GO" id="GO:0008270">
    <property type="term" value="F:zinc ion binding"/>
    <property type="evidence" value="ECO:0000314"/>
    <property type="project" value="UniProtKB"/>
</dbReference>
<dbReference type="GO" id="GO:0009910">
    <property type="term" value="P:negative regulation of flower development"/>
    <property type="evidence" value="ECO:0000315"/>
    <property type="project" value="UniProtKB"/>
</dbReference>
<dbReference type="CDD" id="cd00371">
    <property type="entry name" value="HMA"/>
    <property type="match status" value="2"/>
</dbReference>
<dbReference type="Gene3D" id="3.30.70.100">
    <property type="match status" value="2"/>
</dbReference>
<dbReference type="InterPro" id="IPR044594">
    <property type="entry name" value="HIPP01/3/5/6"/>
</dbReference>
<dbReference type="InterPro" id="IPR006121">
    <property type="entry name" value="HMA_dom"/>
</dbReference>
<dbReference type="InterPro" id="IPR036163">
    <property type="entry name" value="HMA_dom_sf"/>
</dbReference>
<dbReference type="PANTHER" id="PTHR46413:SF2">
    <property type="entry name" value="HEAVY METAL-ASSOCIATED ISOPRENYLATED PLANT PROTEIN 3"/>
    <property type="match status" value="1"/>
</dbReference>
<dbReference type="PANTHER" id="PTHR46413">
    <property type="entry name" value="HEAVY METAL-ASSOCIATED ISOPRENYLATED PLANT PROTEIN 6"/>
    <property type="match status" value="1"/>
</dbReference>
<dbReference type="Pfam" id="PF00403">
    <property type="entry name" value="HMA"/>
    <property type="match status" value="2"/>
</dbReference>
<dbReference type="SUPFAM" id="SSF55008">
    <property type="entry name" value="HMA, heavy metal-associated domain"/>
    <property type="match status" value="2"/>
</dbReference>
<dbReference type="PROSITE" id="PS50846">
    <property type="entry name" value="HMA_2"/>
    <property type="match status" value="2"/>
</dbReference>
<accession>Q9FJH5</accession>
<comment type="function">
    <text evidence="4">Heavy-metal-binding protein. Binds high amounts of zinc. May act as an upstream regulator of the salicylate-dependent pathogen response. Involved in abiotic stress responses, and seed and flower development.</text>
</comment>
<comment type="subcellular location">
    <subcellularLocation>
        <location evidence="4">Nucleus</location>
    </subcellularLocation>
    <subcellularLocation>
        <location evidence="4">Nucleus</location>
        <location evidence="4">Nucleolus</location>
    </subcellularLocation>
    <subcellularLocation>
        <location evidence="4">Cytoplasm</location>
    </subcellularLocation>
    <text evidence="4">Weakly expressed in the cytoplasm.</text>
</comment>
<comment type="alternative products">
    <event type="alternative splicing"/>
    <isoform>
        <id>Q9FJH5-1</id>
        <name>1</name>
        <sequence type="displayed"/>
    </isoform>
    <text evidence="7">A number of isoforms are produced. According to EST sequences.</text>
</comment>
<comment type="induction">
    <text evidence="4">Induced by infection with the bacterial pathogen P.syringae pv. tomato DC3000. Repressed in response to drought and abscisic acid (ABA).</text>
</comment>
<comment type="miscellaneous">
    <text evidence="4">Plants over-expressing HIPP3 show delayed growth of inflorescence.</text>
</comment>
<comment type="similarity">
    <text evidence="7">Belongs to the HIPP family.</text>
</comment>
<name>HIP3_ARATH</name>
<sequence length="283" mass="30984">MGEKKNEGDNKKKGGDNKKKNETPSITVVLKVDMHCEGCASRIVKCVRSFQGVETVKSESATGKLTVTGALDPVKLREKLEEKTKKKVDLVSPQPKKEKEKENKNKNDEDKKKSEEKKKPDNNDKKPKETPVTTAVLKLNFHCQGCIGKIQKTVTKTKGVNGLTMDKEKNLLTVKGTMDVKKLVEILSEKLKRAVEIVPPKKEKDKENGNENGEKKKGGGGDGGGKEKTGNKGGGEGVNMMEYMAAQPAYGYGYYPGGPYGYPIQAHAPQIFSDENPNACVVM</sequence>
<organism>
    <name type="scientific">Arabidopsis thaliana</name>
    <name type="common">Mouse-ear cress</name>
    <dbReference type="NCBI Taxonomy" id="3702"/>
    <lineage>
        <taxon>Eukaryota</taxon>
        <taxon>Viridiplantae</taxon>
        <taxon>Streptophyta</taxon>
        <taxon>Embryophyta</taxon>
        <taxon>Tracheophyta</taxon>
        <taxon>Spermatophyta</taxon>
        <taxon>Magnoliopsida</taxon>
        <taxon>eudicotyledons</taxon>
        <taxon>Gunneridae</taxon>
        <taxon>Pentapetalae</taxon>
        <taxon>rosids</taxon>
        <taxon>malvids</taxon>
        <taxon>Brassicales</taxon>
        <taxon>Brassicaceae</taxon>
        <taxon>Camelineae</taxon>
        <taxon>Arabidopsis</taxon>
    </lineage>
</organism>
<protein>
    <recommendedName>
        <fullName evidence="5 6">Heavy metal-associated isoprenylated plant protein 3</fullName>
        <shortName evidence="5 6">AtHIP03</shortName>
        <shortName evidence="5 6">AtHIPP3</shortName>
    </recommendedName>
</protein>
<reference key="1">
    <citation type="journal article" date="1998" name="DNA Res.">
        <title>Structural analysis of Arabidopsis thaliana chromosome 5. VII. Sequence features of the regions of 1,013,767 bp covered by sixteen physically assigned P1 and TAC clones.</title>
        <authorList>
            <person name="Nakamura Y."/>
            <person name="Sato S."/>
            <person name="Asamizu E."/>
            <person name="Kaneko T."/>
            <person name="Kotani H."/>
            <person name="Miyajima N."/>
            <person name="Tabata S."/>
        </authorList>
    </citation>
    <scope>NUCLEOTIDE SEQUENCE [LARGE SCALE GENOMIC DNA]</scope>
    <source>
        <strain>cv. Columbia</strain>
    </source>
</reference>
<reference key="2">
    <citation type="journal article" date="2017" name="Plant J.">
        <title>Araport11: a complete reannotation of the Arabidopsis thaliana reference genome.</title>
        <authorList>
            <person name="Cheng C.Y."/>
            <person name="Krishnakumar V."/>
            <person name="Chan A.P."/>
            <person name="Thibaud-Nissen F."/>
            <person name="Schobel S."/>
            <person name="Town C.D."/>
        </authorList>
    </citation>
    <scope>GENOME REANNOTATION</scope>
    <source>
        <strain>cv. Columbia</strain>
    </source>
</reference>
<reference key="3">
    <citation type="journal article" date="2003" name="Science">
        <title>Empirical analysis of transcriptional activity in the Arabidopsis genome.</title>
        <authorList>
            <person name="Yamada K."/>
            <person name="Lim J."/>
            <person name="Dale J.M."/>
            <person name="Chen H."/>
            <person name="Shinn P."/>
            <person name="Palm C.J."/>
            <person name="Southwick A.M."/>
            <person name="Wu H.C."/>
            <person name="Kim C.J."/>
            <person name="Nguyen M."/>
            <person name="Pham P.K."/>
            <person name="Cheuk R.F."/>
            <person name="Karlin-Newmann G."/>
            <person name="Liu S.X."/>
            <person name="Lam B."/>
            <person name="Sakano H."/>
            <person name="Wu T."/>
            <person name="Yu G."/>
            <person name="Miranda M."/>
            <person name="Quach H.L."/>
            <person name="Tripp M."/>
            <person name="Chang C.H."/>
            <person name="Lee J.M."/>
            <person name="Toriumi M.J."/>
            <person name="Chan M.M."/>
            <person name="Tang C.C."/>
            <person name="Onodera C.S."/>
            <person name="Deng J.M."/>
            <person name="Akiyama K."/>
            <person name="Ansari Y."/>
            <person name="Arakawa T."/>
            <person name="Banh J."/>
            <person name="Banno F."/>
            <person name="Bowser L."/>
            <person name="Brooks S.Y."/>
            <person name="Carninci P."/>
            <person name="Chao Q."/>
            <person name="Choy N."/>
            <person name="Enju A."/>
            <person name="Goldsmith A.D."/>
            <person name="Gurjal M."/>
            <person name="Hansen N.F."/>
            <person name="Hayashizaki Y."/>
            <person name="Johnson-Hopson C."/>
            <person name="Hsuan V.W."/>
            <person name="Iida K."/>
            <person name="Karnes M."/>
            <person name="Khan S."/>
            <person name="Koesema E."/>
            <person name="Ishida J."/>
            <person name="Jiang P.X."/>
            <person name="Jones T."/>
            <person name="Kawai J."/>
            <person name="Kamiya A."/>
            <person name="Meyers C."/>
            <person name="Nakajima M."/>
            <person name="Narusaka M."/>
            <person name="Seki M."/>
            <person name="Sakurai T."/>
            <person name="Satou M."/>
            <person name="Tamse R."/>
            <person name="Vaysberg M."/>
            <person name="Wallender E.K."/>
            <person name="Wong C."/>
            <person name="Yamamura Y."/>
            <person name="Yuan S."/>
            <person name="Shinozaki K."/>
            <person name="Davis R.W."/>
            <person name="Theologis A."/>
            <person name="Ecker J.R."/>
        </authorList>
    </citation>
    <scope>NUCLEOTIDE SEQUENCE [LARGE SCALE MRNA]</scope>
    <source>
        <strain>cv. Columbia</strain>
    </source>
</reference>
<reference key="4">
    <citation type="submission" date="2006-07" db="EMBL/GenBank/DDBJ databases">
        <title>Large-scale analysis of RIKEN Arabidopsis full-length (RAFL) cDNAs.</title>
        <authorList>
            <person name="Totoki Y."/>
            <person name="Seki M."/>
            <person name="Ishida J."/>
            <person name="Nakajima M."/>
            <person name="Enju A."/>
            <person name="Kamiya A."/>
            <person name="Narusaka M."/>
            <person name="Shin-i T."/>
            <person name="Nakagawa M."/>
            <person name="Sakamoto N."/>
            <person name="Oishi K."/>
            <person name="Kohara Y."/>
            <person name="Kobayashi M."/>
            <person name="Toyoda A."/>
            <person name="Sakaki Y."/>
            <person name="Sakurai T."/>
            <person name="Iida K."/>
            <person name="Akiyama K."/>
            <person name="Satou M."/>
            <person name="Toyoda T."/>
            <person name="Konagaya A."/>
            <person name="Carninci P."/>
            <person name="Kawai J."/>
            <person name="Hayashizaki Y."/>
            <person name="Shinozaki K."/>
        </authorList>
    </citation>
    <scope>NUCLEOTIDE SEQUENCE [LARGE SCALE MRNA]</scope>
    <source>
        <strain>cv. Columbia</strain>
    </source>
</reference>
<reference key="5">
    <citation type="journal article" date="2010" name="Metallomics">
        <title>Metallochaperone-like genes in Arabidopsis thaliana.</title>
        <authorList>
            <person name="Tehseen M."/>
            <person name="Cairns N."/>
            <person name="Sherson S."/>
            <person name="Cobbett C.S."/>
        </authorList>
    </citation>
    <scope>NOMENCLATURE</scope>
    <scope>GENE FAMILY</scope>
</reference>
<reference key="6">
    <citation type="journal article" date="2013" name="FEBS J.">
        <title>Heavy metal-associated isoprenylated plant protein (HIPP): characterization of a family of proteins exclusive to plants.</title>
        <authorList>
            <person name="de Abreu-Neto J.B."/>
            <person name="Turchetto-Zolet A.C."/>
            <person name="de Oliveira L.F."/>
            <person name="Zanettini M.H."/>
            <person name="Margis-Pinheiro M."/>
        </authorList>
    </citation>
    <scope>GENE FAMILY</scope>
    <scope>NOMENCLATURE</scope>
</reference>
<reference key="7">
    <citation type="journal article" date="2015" name="New Phytol.">
        <title>The zinc-binding nuclear protein HIPP3 acts as an upstream regulator of the salicylate-dependent plant immunity pathway and of flowering time in Arabidopsis thaliana.</title>
        <authorList>
            <person name="Zschiesche W."/>
            <person name="Barth O."/>
            <person name="Daniel K."/>
            <person name="Boehme S."/>
            <person name="Rausche J."/>
            <person name="Humbeck K."/>
        </authorList>
    </citation>
    <scope>FUNCTION</scope>
    <scope>SUBCELLULAR LOCATION</scope>
    <scope>INDUCTION</scope>
    <scope>MUTAGENESIS OF CYS-36; CYS-39; CYS-143 AND CYS-146</scope>
</reference>